<organism>
    <name type="scientific">Drosophila melanogaster</name>
    <name type="common">Fruit fly</name>
    <dbReference type="NCBI Taxonomy" id="7227"/>
    <lineage>
        <taxon>Eukaryota</taxon>
        <taxon>Metazoa</taxon>
        <taxon>Ecdysozoa</taxon>
        <taxon>Arthropoda</taxon>
        <taxon>Hexapoda</taxon>
        <taxon>Insecta</taxon>
        <taxon>Pterygota</taxon>
        <taxon>Neoptera</taxon>
        <taxon>Endopterygota</taxon>
        <taxon>Diptera</taxon>
        <taxon>Brachycera</taxon>
        <taxon>Muscomorpha</taxon>
        <taxon>Ephydroidea</taxon>
        <taxon>Drosophilidae</taxon>
        <taxon>Drosophila</taxon>
        <taxon>Sophophora</taxon>
    </lineage>
</organism>
<accession>Q95SX7</accession>
<sequence length="906" mass="103874">MNPLKILIWNANGISRKAKDVELFAHNKKVDILLVTELRLKRGETVKIYGYAYYPAYRPSLNNNSVGGVAVFVRTTLRHFPQRVIETRHIQLSSVKVATGLGDLQFSAIYCSPSTRIEERHFTDIIRACGQRYLVGGDWNARHWLWGDTCNSPRGRELAEALSVTGAKILATGSPTRYPYVPSHTPSCIDFAVYHGIPDHLATITQSWDLDSDHLPLIISIETDSTHVNPSPRLVTKHTDLLAFSRQLESLISLNTTLNSGEEIEMAVDNLTESIHRAAAVSTSPVPRIGTTYGIVLTREARELLTQKRRLRRRAIRSQDPWDRLLWNRAAKQLRNVLRELRSNFFEQKLASMDYTVDAGYSLWKCTKSLKRQPFRQVPIRCPGGELAKNEEEQANCFANHLETRFTHFQFATTEQYQETLDSLETPLQMSLPIKPIRVEEIVEAIKSLPLKKSPGIDNVCNATLKALPVRAILYLALIYNAILRVQFFPKQWKMAAILMIHKPGKPEESPESYRPISLLSSLSKLWERLIANRLNDIMTERRILPDHQFGFRQGHSTVEQVHRLTKHILQAFDDKEYCNAVFIDMQQAFDRVWHDGLISKVKKLFPAPYYGVLKSYLEDRRFMVRVRNSYSIPRVMRAGVPQGSVLGPLLYSVFTADLPCPNAYHMADPRKALLATYADDIALLYSSNCCNEAARGLQEYLTTLAAWCKRWILKVNPQKTINPCFTLKTLSPVTAPIELEGVILDQPSQAKYLGITLDKRLTFGPHLKATTRRCYQRMQQLRWLLNRKSTMTLRAKRAVYVHCVAPIWLYGIQIWGIAAKSNYNRIQVLQNRAMRAITDCPYYVRGTTLHRDLNLHTVEEQISRHTSRYSDRLRRHHSILARRLLPARPLRRLKRKGFAKTLGQP</sequence>
<dbReference type="EC" id="2.7.7.49"/>
<dbReference type="EMBL" id="AY060438">
    <property type="protein sequence ID" value="AAL25477.1"/>
    <property type="molecule type" value="mRNA"/>
</dbReference>
<dbReference type="PIR" id="S55543">
    <property type="entry name" value="S55543"/>
</dbReference>
<dbReference type="SMR" id="Q95SX7"/>
<dbReference type="PRO" id="PR:Q95SX7"/>
<dbReference type="GO" id="GO:0003964">
    <property type="term" value="F:RNA-directed DNA polymerase activity"/>
    <property type="evidence" value="ECO:0000315"/>
    <property type="project" value="UniProtKB"/>
</dbReference>
<dbReference type="GO" id="GO:0006313">
    <property type="term" value="P:DNA transposition"/>
    <property type="evidence" value="ECO:0000315"/>
    <property type="project" value="UniProtKB"/>
</dbReference>
<dbReference type="CDD" id="cd01650">
    <property type="entry name" value="RT_nLTR_like"/>
    <property type="match status" value="1"/>
</dbReference>
<dbReference type="FunFam" id="3.60.10.10:FF:000163">
    <property type="entry name" value="Probable RNA-directed DNA polymerase from transposon BS"/>
    <property type="match status" value="1"/>
</dbReference>
<dbReference type="Gene3D" id="3.60.10.10">
    <property type="entry name" value="Endonuclease/exonuclease/phosphatase"/>
    <property type="match status" value="1"/>
</dbReference>
<dbReference type="InterPro" id="IPR043502">
    <property type="entry name" value="DNA/RNA_pol_sf"/>
</dbReference>
<dbReference type="InterPro" id="IPR036691">
    <property type="entry name" value="Endo/exonu/phosph_ase_sf"/>
</dbReference>
<dbReference type="InterPro" id="IPR005135">
    <property type="entry name" value="Endo/exonuclease/phosphatase"/>
</dbReference>
<dbReference type="InterPro" id="IPR052560">
    <property type="entry name" value="RdDP_mobile_element"/>
</dbReference>
<dbReference type="InterPro" id="IPR000477">
    <property type="entry name" value="RT_dom"/>
</dbReference>
<dbReference type="PANTHER" id="PTHR36688">
    <property type="entry name" value="ENDO/EXONUCLEASE/PHOSPHATASE DOMAIN-CONTAINING PROTEIN"/>
    <property type="match status" value="1"/>
</dbReference>
<dbReference type="PANTHER" id="PTHR36688:SF2">
    <property type="entry name" value="ENDONUCLEASE_EXONUCLEASE_PHOSPHATASE DOMAIN-CONTAINING PROTEIN"/>
    <property type="match status" value="1"/>
</dbReference>
<dbReference type="Pfam" id="PF03372">
    <property type="entry name" value="Exo_endo_phos"/>
    <property type="match status" value="1"/>
</dbReference>
<dbReference type="Pfam" id="PF00078">
    <property type="entry name" value="RVT_1"/>
    <property type="match status" value="1"/>
</dbReference>
<dbReference type="SUPFAM" id="SSF56672">
    <property type="entry name" value="DNA/RNA polymerases"/>
    <property type="match status" value="1"/>
</dbReference>
<dbReference type="SUPFAM" id="SSF56219">
    <property type="entry name" value="DNase I-like"/>
    <property type="match status" value="1"/>
</dbReference>
<dbReference type="PROSITE" id="PS50878">
    <property type="entry name" value="RT_POL"/>
    <property type="match status" value="1"/>
</dbReference>
<comment type="catalytic activity">
    <reaction evidence="2 3">
        <text>DNA(n) + a 2'-deoxyribonucleoside 5'-triphosphate = DNA(n+1) + diphosphate</text>
        <dbReference type="Rhea" id="RHEA:22508"/>
        <dbReference type="Rhea" id="RHEA-COMP:17339"/>
        <dbReference type="Rhea" id="RHEA-COMP:17340"/>
        <dbReference type="ChEBI" id="CHEBI:33019"/>
        <dbReference type="ChEBI" id="CHEBI:61560"/>
        <dbReference type="ChEBI" id="CHEBI:173112"/>
        <dbReference type="EC" id="2.7.7.49"/>
    </reaction>
</comment>
<comment type="cofactor">
    <cofactor evidence="1">
        <name>Mg(2+)</name>
        <dbReference type="ChEBI" id="CHEBI:18420"/>
    </cofactor>
</comment>
<comment type="cofactor">
    <cofactor evidence="1">
        <name>Mn(2+)</name>
        <dbReference type="ChEBI" id="CHEBI:29035"/>
    </cofactor>
</comment>
<gene>
    <name evidence="5" type="primary">RTase</name>
</gene>
<reference evidence="7" key="1">
    <citation type="journal article" date="1995" name="Nucleic Acids Res.">
        <title>BS a novel LINE-like element in Drosophila melanogaster.</title>
        <authorList>
            <person name="Udomkit A."/>
            <person name="Forbes S."/>
            <person name="Dalgleish G."/>
            <person name="Finnegan D.J."/>
        </authorList>
    </citation>
    <scope>NUCLEOTIDE SEQUENCE [GENOMIC DNA]</scope>
</reference>
<reference evidence="5 6" key="2">
    <citation type="journal article" date="2002" name="Genome Biol.">
        <title>A Drosophila full-length cDNA resource.</title>
        <authorList>
            <person name="Stapleton M."/>
            <person name="Carlson J.W."/>
            <person name="Brokstein P."/>
            <person name="Yu C."/>
            <person name="Champe M."/>
            <person name="George R.A."/>
            <person name="Guarin H."/>
            <person name="Kronmiller B."/>
            <person name="Pacleb J.M."/>
            <person name="Park S."/>
            <person name="Wan K.H."/>
            <person name="Rubin G.M."/>
            <person name="Celniker S.E."/>
        </authorList>
    </citation>
    <scope>NUCLEOTIDE SEQUENCE [LARGE SCALE MRNA]</scope>
    <source>
        <strain evidence="6">Berkeley</strain>
        <tissue evidence="4">Embryo</tissue>
    </source>
</reference>
<proteinExistence type="evidence at transcript level"/>
<protein>
    <recommendedName>
        <fullName>Probable RNA-directed DNA polymerase from transposon BS</fullName>
        <ecNumber>2.7.7.49</ecNumber>
    </recommendedName>
    <alternativeName>
        <fullName>Reverse transcriptase</fullName>
    </alternativeName>
</protein>
<name>RTBS_DROME</name>
<feature type="chain" id="PRO_0000076305" description="Probable RNA-directed DNA polymerase from transposon BS">
    <location>
        <begin position="1"/>
        <end position="906"/>
    </location>
</feature>
<feature type="domain" description="Reverse transcriptase" evidence="3">
    <location>
        <begin position="482"/>
        <end position="758"/>
    </location>
</feature>
<keyword id="KW-0548">Nucleotidyltransferase</keyword>
<keyword id="KW-0695">RNA-directed DNA polymerase</keyword>
<keyword id="KW-0808">Transferase</keyword>
<keyword id="KW-0814">Transposable element</keyword>
<evidence type="ECO:0000250" key="1"/>
<evidence type="ECO:0000250" key="2">
    <source>
        <dbReference type="UniProtKB" id="P21328"/>
    </source>
</evidence>
<evidence type="ECO:0000255" key="3">
    <source>
        <dbReference type="PROSITE-ProRule" id="PRU00405"/>
    </source>
</evidence>
<evidence type="ECO:0000269" key="4">
    <source>
    </source>
</evidence>
<evidence type="ECO:0000305" key="5"/>
<evidence type="ECO:0000312" key="6">
    <source>
        <dbReference type="EMBL" id="AAL25477.1"/>
    </source>
</evidence>
<evidence type="ECO:0000312" key="7">
    <source>
        <dbReference type="PIR" id="S55543"/>
    </source>
</evidence>